<evidence type="ECO:0000255" key="1">
    <source>
        <dbReference type="PROSITE-ProRule" id="PRU00981"/>
    </source>
</evidence>
<evidence type="ECO:0000256" key="2">
    <source>
        <dbReference type="SAM" id="MobiDB-lite"/>
    </source>
</evidence>
<evidence type="ECO:0000269" key="3">
    <source>
    </source>
</evidence>
<proteinExistence type="evidence at protein level"/>
<sequence>MTRKIFTNTRERWRQQNVNSAFAKLRKLIPTHPPDKKLSKNETLRLAMRYINFLVKVLGEQSLQQTGVAAQGNILGLFPQGPHLPGLEDRTLLENYQVPSPGPSHHIP</sequence>
<keyword id="KW-0160">Chromosomal rearrangement</keyword>
<keyword id="KW-0238">DNA-binding</keyword>
<keyword id="KW-0656">Proto-oncogene</keyword>
<keyword id="KW-1185">Reference proteome</keyword>
<keyword id="KW-0804">Transcription</keyword>
<keyword id="KW-0805">Transcription regulation</keyword>
<comment type="interaction">
    <interactant intactId="EBI-10237959">
        <id>Q16559</id>
    </interactant>
    <interactant intactId="EBI-533224">
        <id>P15884</id>
        <label>TCF4</label>
    </interactant>
    <organismsDiffer>false</organismsDiffer>
    <experiments>4</experiments>
</comment>
<comment type="disease">
    <text evidence="3">A chromosomal aberration involving TAL2 may be a cause of some T-cell acute lymphoblastic leukemia (T-ALL). Translocation t(7;9)(q34;q32) with TCRB.</text>
</comment>
<comment type="online information" name="Atlas of Genetics and Cytogenetics in Oncology and Haematology">
    <link uri="https://atlasgeneticsoncology.org/gene/28/TAL2"/>
</comment>
<reference key="1">
    <citation type="journal article" date="1991" name="Proc. Natl. Acad. Sci. U.S.A.">
        <title>TAL2, a helix-loop-helix gene activated by the (7;9)(q34;q32) translocation in human T-cell leukemia.</title>
        <authorList>
            <person name="Xia Y."/>
            <person name="Brown L."/>
            <person name="Yang C.Y.-C."/>
            <person name="Tsan J.T."/>
            <person name="Siciliano M.J."/>
            <person name="Espinosa R. III"/>
            <person name="Le Beau M.M."/>
            <person name="Baer R.J."/>
        </authorList>
    </citation>
    <scope>NUCLEOTIDE SEQUENCE [GENOMIC DNA]</scope>
    <scope>CHROMOSOMAL TRANSLOCATION</scope>
</reference>
<reference key="2">
    <citation type="journal article" date="1994" name="Oncogene">
        <title>Products of the TAL2 oncogene in leukemic T cells: bHLH phosphoproteins with DNA-binding activity.</title>
        <authorList>
            <person name="Xia Y."/>
            <person name="Hwang L.Y."/>
            <person name="Cobb M.H."/>
            <person name="Baer R."/>
        </authorList>
    </citation>
    <scope>NUCLEOTIDE SEQUENCE [GENOMIC DNA]</scope>
</reference>
<reference key="3">
    <citation type="journal article" date="2004" name="Nature">
        <title>DNA sequence and analysis of human chromosome 9.</title>
        <authorList>
            <person name="Humphray S.J."/>
            <person name="Oliver K."/>
            <person name="Hunt A.R."/>
            <person name="Plumb R.W."/>
            <person name="Loveland J.E."/>
            <person name="Howe K.L."/>
            <person name="Andrews T.D."/>
            <person name="Searle S."/>
            <person name="Hunt S.E."/>
            <person name="Scott C.E."/>
            <person name="Jones M.C."/>
            <person name="Ainscough R."/>
            <person name="Almeida J.P."/>
            <person name="Ambrose K.D."/>
            <person name="Ashwell R.I.S."/>
            <person name="Babbage A.K."/>
            <person name="Babbage S."/>
            <person name="Bagguley C.L."/>
            <person name="Bailey J."/>
            <person name="Banerjee R."/>
            <person name="Barker D.J."/>
            <person name="Barlow K.F."/>
            <person name="Bates K."/>
            <person name="Beasley H."/>
            <person name="Beasley O."/>
            <person name="Bird C.P."/>
            <person name="Bray-Allen S."/>
            <person name="Brown A.J."/>
            <person name="Brown J.Y."/>
            <person name="Burford D."/>
            <person name="Burrill W."/>
            <person name="Burton J."/>
            <person name="Carder C."/>
            <person name="Carter N.P."/>
            <person name="Chapman J.C."/>
            <person name="Chen Y."/>
            <person name="Clarke G."/>
            <person name="Clark S.Y."/>
            <person name="Clee C.M."/>
            <person name="Clegg S."/>
            <person name="Collier R.E."/>
            <person name="Corby N."/>
            <person name="Crosier M."/>
            <person name="Cummings A.T."/>
            <person name="Davies J."/>
            <person name="Dhami P."/>
            <person name="Dunn M."/>
            <person name="Dutta I."/>
            <person name="Dyer L.W."/>
            <person name="Earthrowl M.E."/>
            <person name="Faulkner L."/>
            <person name="Fleming C.J."/>
            <person name="Frankish A."/>
            <person name="Frankland J.A."/>
            <person name="French L."/>
            <person name="Fricker D.G."/>
            <person name="Garner P."/>
            <person name="Garnett J."/>
            <person name="Ghori J."/>
            <person name="Gilbert J.G.R."/>
            <person name="Glison C."/>
            <person name="Grafham D.V."/>
            <person name="Gribble S."/>
            <person name="Griffiths C."/>
            <person name="Griffiths-Jones S."/>
            <person name="Grocock R."/>
            <person name="Guy J."/>
            <person name="Hall R.E."/>
            <person name="Hammond S."/>
            <person name="Harley J.L."/>
            <person name="Harrison E.S.I."/>
            <person name="Hart E.A."/>
            <person name="Heath P.D."/>
            <person name="Henderson C.D."/>
            <person name="Hopkins B.L."/>
            <person name="Howard P.J."/>
            <person name="Howden P.J."/>
            <person name="Huckle E."/>
            <person name="Johnson C."/>
            <person name="Johnson D."/>
            <person name="Joy A.A."/>
            <person name="Kay M."/>
            <person name="Keenan S."/>
            <person name="Kershaw J.K."/>
            <person name="Kimberley A.M."/>
            <person name="King A."/>
            <person name="Knights A."/>
            <person name="Laird G.K."/>
            <person name="Langford C."/>
            <person name="Lawlor S."/>
            <person name="Leongamornlert D.A."/>
            <person name="Leversha M."/>
            <person name="Lloyd C."/>
            <person name="Lloyd D.M."/>
            <person name="Lovell J."/>
            <person name="Martin S."/>
            <person name="Mashreghi-Mohammadi M."/>
            <person name="Matthews L."/>
            <person name="McLaren S."/>
            <person name="McLay K.E."/>
            <person name="McMurray A."/>
            <person name="Milne S."/>
            <person name="Nickerson T."/>
            <person name="Nisbett J."/>
            <person name="Nordsiek G."/>
            <person name="Pearce A.V."/>
            <person name="Peck A.I."/>
            <person name="Porter K.M."/>
            <person name="Pandian R."/>
            <person name="Pelan S."/>
            <person name="Phillimore B."/>
            <person name="Povey S."/>
            <person name="Ramsey Y."/>
            <person name="Rand V."/>
            <person name="Scharfe M."/>
            <person name="Sehra H.K."/>
            <person name="Shownkeen R."/>
            <person name="Sims S.K."/>
            <person name="Skuce C.D."/>
            <person name="Smith M."/>
            <person name="Steward C.A."/>
            <person name="Swarbreck D."/>
            <person name="Sycamore N."/>
            <person name="Tester J."/>
            <person name="Thorpe A."/>
            <person name="Tracey A."/>
            <person name="Tromans A."/>
            <person name="Thomas D.W."/>
            <person name="Wall M."/>
            <person name="Wallis J.M."/>
            <person name="West A.P."/>
            <person name="Whitehead S.L."/>
            <person name="Willey D.L."/>
            <person name="Williams S.A."/>
            <person name="Wilming L."/>
            <person name="Wray P.W."/>
            <person name="Young L."/>
            <person name="Ashurst J.L."/>
            <person name="Coulson A."/>
            <person name="Blocker H."/>
            <person name="Durbin R.M."/>
            <person name="Sulston J.E."/>
            <person name="Hubbard T."/>
            <person name="Jackson M.J."/>
            <person name="Bentley D.R."/>
            <person name="Beck S."/>
            <person name="Rogers J."/>
            <person name="Dunham I."/>
        </authorList>
    </citation>
    <scope>NUCLEOTIDE SEQUENCE [LARGE SCALE GENOMIC DNA]</scope>
</reference>
<reference key="4">
    <citation type="journal article" date="2004" name="Genome Res.">
        <title>The status, quality, and expansion of the NIH full-length cDNA project: the Mammalian Gene Collection (MGC).</title>
        <authorList>
            <consortium name="The MGC Project Team"/>
        </authorList>
    </citation>
    <scope>NUCLEOTIDE SEQUENCE [LARGE SCALE MRNA]</scope>
</reference>
<dbReference type="EMBL" id="M81078">
    <property type="protein sequence ID" value="AAA60613.1"/>
    <property type="molecule type" value="Genomic_DNA"/>
</dbReference>
<dbReference type="EMBL" id="S69377">
    <property type="protein sequence ID" value="AAC60629.1"/>
    <property type="molecule type" value="Genomic_DNA"/>
</dbReference>
<dbReference type="EMBL" id="AL158070">
    <property type="status" value="NOT_ANNOTATED_CDS"/>
    <property type="molecule type" value="Genomic_DNA"/>
</dbReference>
<dbReference type="EMBL" id="BC069422">
    <property type="protein sequence ID" value="AAH69422.1"/>
    <property type="molecule type" value="mRNA"/>
</dbReference>
<dbReference type="EMBL" id="BC126373">
    <property type="protein sequence ID" value="AAI26374.1"/>
    <property type="molecule type" value="mRNA"/>
</dbReference>
<dbReference type="EMBL" id="BC126375">
    <property type="protein sequence ID" value="AAI26376.1"/>
    <property type="molecule type" value="mRNA"/>
</dbReference>
<dbReference type="CCDS" id="CCDS6767.1"/>
<dbReference type="PIR" id="A41629">
    <property type="entry name" value="A41629"/>
</dbReference>
<dbReference type="RefSeq" id="NP_005412.1">
    <property type="nucleotide sequence ID" value="NM_005421.3"/>
</dbReference>
<dbReference type="SMR" id="Q16559"/>
<dbReference type="BioGRID" id="112750">
    <property type="interactions" value="10"/>
</dbReference>
<dbReference type="FunCoup" id="Q16559">
    <property type="interactions" value="240"/>
</dbReference>
<dbReference type="IntAct" id="Q16559">
    <property type="interactions" value="9"/>
</dbReference>
<dbReference type="STRING" id="9606.ENSP00000334547"/>
<dbReference type="iPTMnet" id="Q16559"/>
<dbReference type="PhosphoSitePlus" id="Q16559"/>
<dbReference type="BioMuta" id="TAL2"/>
<dbReference type="DMDM" id="7531207"/>
<dbReference type="MassIVE" id="Q16559"/>
<dbReference type="PaxDb" id="9606-ENSP00000334547"/>
<dbReference type="PeptideAtlas" id="Q16559"/>
<dbReference type="Antibodypedia" id="29308">
    <property type="antibodies" value="76 antibodies from 23 providers"/>
</dbReference>
<dbReference type="DNASU" id="6887"/>
<dbReference type="Ensembl" id="ENST00000334077.6">
    <property type="protein sequence ID" value="ENSP00000334547.3"/>
    <property type="gene ID" value="ENSG00000186051.7"/>
</dbReference>
<dbReference type="GeneID" id="6887"/>
<dbReference type="KEGG" id="hsa:6887"/>
<dbReference type="MANE-Select" id="ENST00000334077.6">
    <property type="protein sequence ID" value="ENSP00000334547.3"/>
    <property type="RefSeq nucleotide sequence ID" value="NM_005421.3"/>
    <property type="RefSeq protein sequence ID" value="NP_005412.1"/>
</dbReference>
<dbReference type="UCSC" id="uc004bct.4">
    <property type="organism name" value="human"/>
</dbReference>
<dbReference type="AGR" id="HGNC:11557"/>
<dbReference type="CTD" id="6887"/>
<dbReference type="DisGeNET" id="6887"/>
<dbReference type="GeneCards" id="TAL2"/>
<dbReference type="HGNC" id="HGNC:11557">
    <property type="gene designation" value="TAL2"/>
</dbReference>
<dbReference type="HPA" id="ENSG00000186051">
    <property type="expression patterns" value="Tissue enriched (skeletal)"/>
</dbReference>
<dbReference type="MalaCards" id="TAL2"/>
<dbReference type="MIM" id="186855">
    <property type="type" value="gene"/>
</dbReference>
<dbReference type="neXtProt" id="NX_Q16559"/>
<dbReference type="OpenTargets" id="ENSG00000186051"/>
<dbReference type="PharmGKB" id="PA36327"/>
<dbReference type="VEuPathDB" id="HostDB:ENSG00000186051"/>
<dbReference type="eggNOG" id="KOG4029">
    <property type="taxonomic scope" value="Eukaryota"/>
</dbReference>
<dbReference type="GeneTree" id="ENSGT00940000160867"/>
<dbReference type="HOGENOM" id="CLU_158724_0_0_1"/>
<dbReference type="InParanoid" id="Q16559"/>
<dbReference type="OMA" id="EDCGVPS"/>
<dbReference type="OrthoDB" id="10069510at2759"/>
<dbReference type="PAN-GO" id="Q16559">
    <property type="GO annotations" value="3 GO annotations based on evolutionary models"/>
</dbReference>
<dbReference type="PhylomeDB" id="Q16559"/>
<dbReference type="TreeFam" id="TF315153"/>
<dbReference type="PathwayCommons" id="Q16559"/>
<dbReference type="SignaLink" id="Q16559"/>
<dbReference type="SIGNOR" id="Q16559"/>
<dbReference type="BioGRID-ORCS" id="6887">
    <property type="hits" value="9 hits in 1135 CRISPR screens"/>
</dbReference>
<dbReference type="CD-CODE" id="91857CE7">
    <property type="entry name" value="Nucleolus"/>
</dbReference>
<dbReference type="ChiTaRS" id="TAL2">
    <property type="organism name" value="human"/>
</dbReference>
<dbReference type="GeneWiki" id="TAL2"/>
<dbReference type="GenomeRNAi" id="6887"/>
<dbReference type="Pharos" id="Q16559">
    <property type="development level" value="Tbio"/>
</dbReference>
<dbReference type="PRO" id="PR:Q16559"/>
<dbReference type="Proteomes" id="UP000005640">
    <property type="component" value="Chromosome 9"/>
</dbReference>
<dbReference type="RNAct" id="Q16559">
    <property type="molecule type" value="protein"/>
</dbReference>
<dbReference type="Bgee" id="ENSG00000186051">
    <property type="expression patterns" value="Expressed in skeletal muscle tissue of rectus abdominis and 115 other cell types or tissues"/>
</dbReference>
<dbReference type="GO" id="GO:0000785">
    <property type="term" value="C:chromatin"/>
    <property type="evidence" value="ECO:0000247"/>
    <property type="project" value="NTNU_SB"/>
</dbReference>
<dbReference type="GO" id="GO:0003677">
    <property type="term" value="F:DNA binding"/>
    <property type="evidence" value="ECO:0000304"/>
    <property type="project" value="ProtInc"/>
</dbReference>
<dbReference type="GO" id="GO:0000981">
    <property type="term" value="F:DNA-binding transcription factor activity, RNA polymerase II-specific"/>
    <property type="evidence" value="ECO:0000247"/>
    <property type="project" value="NTNU_SB"/>
</dbReference>
<dbReference type="GO" id="GO:0046983">
    <property type="term" value="F:protein dimerization activity"/>
    <property type="evidence" value="ECO:0007669"/>
    <property type="project" value="InterPro"/>
</dbReference>
<dbReference type="GO" id="GO:0000978">
    <property type="term" value="F:RNA polymerase II cis-regulatory region sequence-specific DNA binding"/>
    <property type="evidence" value="ECO:0000318"/>
    <property type="project" value="GO_Central"/>
</dbReference>
<dbReference type="GO" id="GO:0030901">
    <property type="term" value="P:midbrain development"/>
    <property type="evidence" value="ECO:0007669"/>
    <property type="project" value="Ensembl"/>
</dbReference>
<dbReference type="GO" id="GO:0035264">
    <property type="term" value="P:multicellular organism growth"/>
    <property type="evidence" value="ECO:0007669"/>
    <property type="project" value="Ensembl"/>
</dbReference>
<dbReference type="GO" id="GO:0009791">
    <property type="term" value="P:post-embryonic development"/>
    <property type="evidence" value="ECO:0007669"/>
    <property type="project" value="Ensembl"/>
</dbReference>
<dbReference type="GO" id="GO:0006357">
    <property type="term" value="P:regulation of transcription by RNA polymerase II"/>
    <property type="evidence" value="ECO:0000318"/>
    <property type="project" value="GO_Central"/>
</dbReference>
<dbReference type="GO" id="GO:0021794">
    <property type="term" value="P:thalamus development"/>
    <property type="evidence" value="ECO:0007669"/>
    <property type="project" value="Ensembl"/>
</dbReference>
<dbReference type="CDD" id="cd19707">
    <property type="entry name" value="bHLH_TS_TAL2"/>
    <property type="match status" value="1"/>
</dbReference>
<dbReference type="FunFam" id="4.10.280.10:FF:000015">
    <property type="entry name" value="T-cell acute lymphocytic leukemia 1"/>
    <property type="match status" value="1"/>
</dbReference>
<dbReference type="Gene3D" id="4.10.280.10">
    <property type="entry name" value="Helix-loop-helix DNA-binding domain"/>
    <property type="match status" value="1"/>
</dbReference>
<dbReference type="InterPro" id="IPR011598">
    <property type="entry name" value="bHLH_dom"/>
</dbReference>
<dbReference type="InterPro" id="IPR036638">
    <property type="entry name" value="HLH_DNA-bd_sf"/>
</dbReference>
<dbReference type="InterPro" id="IPR040238">
    <property type="entry name" value="TAL-like"/>
</dbReference>
<dbReference type="PANTHER" id="PTHR13864:SF21">
    <property type="entry name" value="T-CELL ACUTE LYMPHOCYTIC LEUKEMIA PROTEIN 2"/>
    <property type="match status" value="1"/>
</dbReference>
<dbReference type="PANTHER" id="PTHR13864">
    <property type="entry name" value="T-CELL ACUTE LYMPHOCYTIC LEUKEMIA/STEM CELL LEUKEMIA-RELATED"/>
    <property type="match status" value="1"/>
</dbReference>
<dbReference type="Pfam" id="PF00010">
    <property type="entry name" value="HLH"/>
    <property type="match status" value="1"/>
</dbReference>
<dbReference type="SMART" id="SM00353">
    <property type="entry name" value="HLH"/>
    <property type="match status" value="1"/>
</dbReference>
<dbReference type="SUPFAM" id="SSF47459">
    <property type="entry name" value="HLH, helix-loop-helix DNA-binding domain"/>
    <property type="match status" value="1"/>
</dbReference>
<dbReference type="PROSITE" id="PS50888">
    <property type="entry name" value="BHLH"/>
    <property type="match status" value="1"/>
</dbReference>
<gene>
    <name type="primary">TAL2</name>
    <name type="synonym">BHLHA19</name>
</gene>
<feature type="chain" id="PRO_0000127456" description="T-cell acute lymphocytic leukemia protein 2">
    <location>
        <begin position="1"/>
        <end position="108"/>
    </location>
</feature>
<feature type="domain" description="bHLH" evidence="1">
    <location>
        <begin position="2"/>
        <end position="54"/>
    </location>
</feature>
<feature type="region of interest" description="Disordered" evidence="2">
    <location>
        <begin position="89"/>
        <end position="108"/>
    </location>
</feature>
<accession>Q16559</accession>
<accession>A0AVI7</accession>
<organism>
    <name type="scientific">Homo sapiens</name>
    <name type="common">Human</name>
    <dbReference type="NCBI Taxonomy" id="9606"/>
    <lineage>
        <taxon>Eukaryota</taxon>
        <taxon>Metazoa</taxon>
        <taxon>Chordata</taxon>
        <taxon>Craniata</taxon>
        <taxon>Vertebrata</taxon>
        <taxon>Euteleostomi</taxon>
        <taxon>Mammalia</taxon>
        <taxon>Eutheria</taxon>
        <taxon>Euarchontoglires</taxon>
        <taxon>Primates</taxon>
        <taxon>Haplorrhini</taxon>
        <taxon>Catarrhini</taxon>
        <taxon>Hominidae</taxon>
        <taxon>Homo</taxon>
    </lineage>
</organism>
<name>TAL2_HUMAN</name>
<protein>
    <recommendedName>
        <fullName>T-cell acute lymphocytic leukemia protein 2</fullName>
        <shortName>TAL-2</shortName>
    </recommendedName>
    <alternativeName>
        <fullName>Class A basic helix-loop-helix protein 19</fullName>
        <shortName>bHLHa19</shortName>
    </alternativeName>
</protein>